<comment type="function">
    <text evidence="10">Involved in the targeting and/or fusion of transport vesicles to their target membrane.</text>
</comment>
<comment type="subcellular location">
    <subcellularLocation>
        <location evidence="5">Cell membrane</location>
        <topology evidence="1">Single-pass type IV membrane protein</topology>
    </subcellularLocation>
    <subcellularLocation>
        <location evidence="5">Early endosome membrane</location>
        <topology evidence="1">Single-pass type IV membrane protein</topology>
    </subcellularLocation>
</comment>
<comment type="alternative products">
    <event type="alternative splicing"/>
    <isoform>
        <id>P47192-1</id>
        <name>1</name>
        <sequence type="displayed"/>
    </isoform>
    <text>A number of isoforms are produced. According to EST sequences.</text>
</comment>
<comment type="tissue specificity">
    <text evidence="5">Highly expressed in stems and roots. Detected in flowers and leaves.</text>
</comment>
<comment type="similarity">
    <text evidence="9">Belongs to the synaptobrevin family.</text>
</comment>
<reference key="1">
    <citation type="submission" date="1994-12" db="EMBL/GenBank/DDBJ databases">
        <title>The SAR1 gene of Arabidopsis thaliana encodes a member of synaptobrevin family of membrane proteins.</title>
        <authorList>
            <person name="Schena M."/>
            <person name="Davis R.W."/>
        </authorList>
    </citation>
    <scope>NUCLEOTIDE SEQUENCE [MRNA]</scope>
    <source>
        <strain>cv. Columbia</strain>
    </source>
</reference>
<reference key="2">
    <citation type="journal article" date="1999" name="Nature">
        <title>Sequence and analysis of chromosome 2 of the plant Arabidopsis thaliana.</title>
        <authorList>
            <person name="Lin X."/>
            <person name="Kaul S."/>
            <person name="Rounsley S.D."/>
            <person name="Shea T.P."/>
            <person name="Benito M.-I."/>
            <person name="Town C.D."/>
            <person name="Fujii C.Y."/>
            <person name="Mason T.M."/>
            <person name="Bowman C.L."/>
            <person name="Barnstead M.E."/>
            <person name="Feldblyum T.V."/>
            <person name="Buell C.R."/>
            <person name="Ketchum K.A."/>
            <person name="Lee J.J."/>
            <person name="Ronning C.M."/>
            <person name="Koo H.L."/>
            <person name="Moffat K.S."/>
            <person name="Cronin L.A."/>
            <person name="Shen M."/>
            <person name="Pai G."/>
            <person name="Van Aken S."/>
            <person name="Umayam L."/>
            <person name="Tallon L.J."/>
            <person name="Gill J.E."/>
            <person name="Adams M.D."/>
            <person name="Carrera A.J."/>
            <person name="Creasy T.H."/>
            <person name="Goodman H.M."/>
            <person name="Somerville C.R."/>
            <person name="Copenhaver G.P."/>
            <person name="Preuss D."/>
            <person name="Nierman W.C."/>
            <person name="White O."/>
            <person name="Eisen J.A."/>
            <person name="Salzberg S.L."/>
            <person name="Fraser C.M."/>
            <person name="Venter J.C."/>
        </authorList>
    </citation>
    <scope>NUCLEOTIDE SEQUENCE [LARGE SCALE GENOMIC DNA]</scope>
    <source>
        <strain>cv. Columbia</strain>
    </source>
</reference>
<reference key="3">
    <citation type="journal article" date="2017" name="Plant J.">
        <title>Araport11: a complete reannotation of the Arabidopsis thaliana reference genome.</title>
        <authorList>
            <person name="Cheng C.Y."/>
            <person name="Krishnakumar V."/>
            <person name="Chan A.P."/>
            <person name="Thibaud-Nissen F."/>
            <person name="Schobel S."/>
            <person name="Town C.D."/>
        </authorList>
    </citation>
    <scope>GENOME REANNOTATION</scope>
    <source>
        <strain>cv. Columbia</strain>
    </source>
</reference>
<reference key="4">
    <citation type="journal article" date="2003" name="Science">
        <title>Empirical analysis of transcriptional activity in the Arabidopsis genome.</title>
        <authorList>
            <person name="Yamada K."/>
            <person name="Lim J."/>
            <person name="Dale J.M."/>
            <person name="Chen H."/>
            <person name="Shinn P."/>
            <person name="Palm C.J."/>
            <person name="Southwick A.M."/>
            <person name="Wu H.C."/>
            <person name="Kim C.J."/>
            <person name="Nguyen M."/>
            <person name="Pham P.K."/>
            <person name="Cheuk R.F."/>
            <person name="Karlin-Newmann G."/>
            <person name="Liu S.X."/>
            <person name="Lam B."/>
            <person name="Sakano H."/>
            <person name="Wu T."/>
            <person name="Yu G."/>
            <person name="Miranda M."/>
            <person name="Quach H.L."/>
            <person name="Tripp M."/>
            <person name="Chang C.H."/>
            <person name="Lee J.M."/>
            <person name="Toriumi M.J."/>
            <person name="Chan M.M."/>
            <person name="Tang C.C."/>
            <person name="Onodera C.S."/>
            <person name="Deng J.M."/>
            <person name="Akiyama K."/>
            <person name="Ansari Y."/>
            <person name="Arakawa T."/>
            <person name="Banh J."/>
            <person name="Banno F."/>
            <person name="Bowser L."/>
            <person name="Brooks S.Y."/>
            <person name="Carninci P."/>
            <person name="Chao Q."/>
            <person name="Choy N."/>
            <person name="Enju A."/>
            <person name="Goldsmith A.D."/>
            <person name="Gurjal M."/>
            <person name="Hansen N.F."/>
            <person name="Hayashizaki Y."/>
            <person name="Johnson-Hopson C."/>
            <person name="Hsuan V.W."/>
            <person name="Iida K."/>
            <person name="Karnes M."/>
            <person name="Khan S."/>
            <person name="Koesema E."/>
            <person name="Ishida J."/>
            <person name="Jiang P.X."/>
            <person name="Jones T."/>
            <person name="Kawai J."/>
            <person name="Kamiya A."/>
            <person name="Meyers C."/>
            <person name="Nakajima M."/>
            <person name="Narusaka M."/>
            <person name="Seki M."/>
            <person name="Sakurai T."/>
            <person name="Satou M."/>
            <person name="Tamse R."/>
            <person name="Vaysberg M."/>
            <person name="Wallender E.K."/>
            <person name="Wong C."/>
            <person name="Yamamura Y."/>
            <person name="Yuan S."/>
            <person name="Shinozaki K."/>
            <person name="Davis R.W."/>
            <person name="Theologis A."/>
            <person name="Ecker J.R."/>
        </authorList>
    </citation>
    <scope>NUCLEOTIDE SEQUENCE [LARGE SCALE MRNA]</scope>
    <source>
        <strain>cv. Columbia</strain>
    </source>
</reference>
<reference key="5">
    <citation type="submission" date="2002-03" db="EMBL/GenBank/DDBJ databases">
        <title>Full-length cDNA from Arabidopsis thaliana.</title>
        <authorList>
            <person name="Brover V.V."/>
            <person name="Troukhan M.E."/>
            <person name="Alexandrov N.A."/>
            <person name="Lu Y.-P."/>
            <person name="Flavell R.B."/>
            <person name="Feldmann K.A."/>
        </authorList>
    </citation>
    <scope>NUCLEOTIDE SEQUENCE [LARGE SCALE MRNA]</scope>
</reference>
<reference key="6">
    <citation type="journal article" date="1992" name="Proc. Natl. Acad. Sci. U.S.A.">
        <title>HD-Zip proteins: members of an Arabidopsis homeodomain protein superfamily.</title>
        <authorList>
            <person name="Schena M."/>
            <person name="Davis R.W."/>
        </authorList>
    </citation>
    <scope>NUCLEOTIDE SEQUENCE [MRNA] OF 140-200</scope>
    <source>
        <strain>cv. Columbia</strain>
    </source>
</reference>
<reference key="7">
    <citation type="journal article" date="2000" name="Plant Physiol.">
        <title>The Arabidopsis genome. An abundance of soluble N-ethylmaleimide-sensitive factor adaptor protein receptors.</title>
        <authorList>
            <person name="Sanderfoot A.A."/>
            <person name="Assaad F.F."/>
            <person name="Raikhel N.V."/>
        </authorList>
    </citation>
    <scope>GENE FAMILY</scope>
    <scope>NOMENCLATURE</scope>
</reference>
<reference key="8">
    <citation type="journal article" date="2004" name="Cell Struct. Funct.">
        <title>Systematic analysis of SNARE molecules in Arabidopsis: dissection of the post-Golgi network in plant cells.</title>
        <authorList>
            <person name="Uemura T."/>
            <person name="Ueda T."/>
            <person name="Ohniwa R.L."/>
            <person name="Nakano A."/>
            <person name="Takeyasu K."/>
            <person name="Sato M.H."/>
        </authorList>
    </citation>
    <scope>TISSUE SPECIFICITY</scope>
    <scope>SUBCELLULAR LOCATION</scope>
</reference>
<organism>
    <name type="scientific">Arabidopsis thaliana</name>
    <name type="common">Mouse-ear cress</name>
    <dbReference type="NCBI Taxonomy" id="3702"/>
    <lineage>
        <taxon>Eukaryota</taxon>
        <taxon>Viridiplantae</taxon>
        <taxon>Streptophyta</taxon>
        <taxon>Embryophyta</taxon>
        <taxon>Tracheophyta</taxon>
        <taxon>Spermatophyta</taxon>
        <taxon>Magnoliopsida</taxon>
        <taxon>eudicotyledons</taxon>
        <taxon>Gunneridae</taxon>
        <taxon>Pentapetalae</taxon>
        <taxon>rosids</taxon>
        <taxon>malvids</taxon>
        <taxon>Brassicales</taxon>
        <taxon>Brassicaceae</taxon>
        <taxon>Camelineae</taxon>
        <taxon>Arabidopsis</taxon>
    </lineage>
</organism>
<feature type="chain" id="PRO_0000206755" description="Vesicle-associated membrane protein 722">
    <location>
        <begin position="1"/>
        <end position="221"/>
    </location>
</feature>
<feature type="topological domain" description="Cytoplasmic" evidence="2">
    <location>
        <begin position="1"/>
        <end position="196"/>
    </location>
</feature>
<feature type="transmembrane region" description="Helical; Anchor for type IV membrane protein" evidence="2">
    <location>
        <begin position="197"/>
        <end position="217"/>
    </location>
</feature>
<feature type="topological domain" description="Vesicular" evidence="2">
    <location>
        <begin position="218"/>
        <end position="221"/>
    </location>
</feature>
<feature type="domain" description="Longin" evidence="3">
    <location>
        <begin position="10"/>
        <end position="114"/>
    </location>
</feature>
<feature type="domain" description="v-SNARE coiled-coil homology" evidence="4">
    <location>
        <begin position="130"/>
        <end position="190"/>
    </location>
</feature>
<feature type="sequence conflict" description="In Ref. 1; AAA56991." evidence="9" ref="1">
    <original>D</original>
    <variation>A</variation>
    <location>
        <position position="123"/>
    </location>
</feature>
<protein>
    <recommendedName>
        <fullName evidence="6">Vesicle-associated membrane protein 722</fullName>
        <shortName evidence="6">AtVAMP722</shortName>
    </recommendedName>
    <alternativeName>
        <fullName evidence="8">Synaptobrevin-related protein 1</fullName>
    </alternativeName>
</protein>
<sequence>MAQQSLIYSFVARGTVILVEFTDFKGNFTSIAAQCLQKLPSSNNKFTYNCDGHTFNYLVENGFTYCVVAVDSAGRQIPMAFLERVKEDFNKRYGGGKAATAQANSLNKEFGSKLKEHMQYCMDHPDEISKLAKVKAQVSEVKGVMMENIEKVLDRGEKIELLVDKTENLRSQAQDFRTQGTQMRRKMWFQNMKIKLIVLAIIIALILIIILSICGGFNCGK</sequence>
<dbReference type="EMBL" id="M90418">
    <property type="protein sequence ID" value="AAA56991.1"/>
    <property type="molecule type" value="mRNA"/>
</dbReference>
<dbReference type="EMBL" id="AC002334">
    <property type="protein sequence ID" value="AAC04921.1"/>
    <property type="molecule type" value="Genomic_DNA"/>
</dbReference>
<dbReference type="EMBL" id="CP002685">
    <property type="protein sequence ID" value="AEC08787.1"/>
    <property type="molecule type" value="Genomic_DNA"/>
</dbReference>
<dbReference type="EMBL" id="AF419564">
    <property type="protein sequence ID" value="AAL31896.1"/>
    <property type="molecule type" value="mRNA"/>
</dbReference>
<dbReference type="EMBL" id="AY072422">
    <property type="protein sequence ID" value="AAL62414.1"/>
    <property type="molecule type" value="mRNA"/>
</dbReference>
<dbReference type="EMBL" id="AY079037">
    <property type="protein sequence ID" value="AAL79587.1"/>
    <property type="molecule type" value="mRNA"/>
</dbReference>
<dbReference type="EMBL" id="AY114706">
    <property type="protein sequence ID" value="AAM48025.1"/>
    <property type="molecule type" value="mRNA"/>
</dbReference>
<dbReference type="EMBL" id="AY128288">
    <property type="protein sequence ID" value="AAM91096.1"/>
    <property type="molecule type" value="mRNA"/>
</dbReference>
<dbReference type="EMBL" id="AY086363">
    <property type="protein sequence ID" value="AAM64431.1"/>
    <property type="molecule type" value="mRNA"/>
</dbReference>
<dbReference type="PIR" id="D44088">
    <property type="entry name" value="D44088"/>
</dbReference>
<dbReference type="PIR" id="F84741">
    <property type="entry name" value="F84741"/>
</dbReference>
<dbReference type="RefSeq" id="NP_180871.1">
    <molecule id="P47192-1"/>
    <property type="nucleotide sequence ID" value="NM_128872.3"/>
</dbReference>
<dbReference type="SMR" id="P47192"/>
<dbReference type="BioGRID" id="3221">
    <property type="interactions" value="22"/>
</dbReference>
<dbReference type="DIP" id="DIP-59828N"/>
<dbReference type="FunCoup" id="P47192">
    <property type="interactions" value="1157"/>
</dbReference>
<dbReference type="IntAct" id="P47192">
    <property type="interactions" value="13"/>
</dbReference>
<dbReference type="STRING" id="3702.P47192"/>
<dbReference type="PaxDb" id="3702-AT2G33120.2"/>
<dbReference type="ProteomicsDB" id="242306">
    <molecule id="P47192-1"/>
</dbReference>
<dbReference type="EnsemblPlants" id="AT2G33120.1">
    <molecule id="P47192-1"/>
    <property type="protein sequence ID" value="AT2G33120.1"/>
    <property type="gene ID" value="AT2G33120"/>
</dbReference>
<dbReference type="GeneID" id="817874"/>
<dbReference type="Gramene" id="AT2G33120.1">
    <molecule id="P47192-1"/>
    <property type="protein sequence ID" value="AT2G33120.1"/>
    <property type="gene ID" value="AT2G33120"/>
</dbReference>
<dbReference type="KEGG" id="ath:AT2G33120"/>
<dbReference type="Araport" id="AT2G33120"/>
<dbReference type="TAIR" id="AT2G33120">
    <property type="gene designation" value="SAR1"/>
</dbReference>
<dbReference type="eggNOG" id="KOG0859">
    <property type="taxonomic scope" value="Eukaryota"/>
</dbReference>
<dbReference type="HOGENOM" id="CLU_064620_1_0_1"/>
<dbReference type="InParanoid" id="P47192"/>
<dbReference type="OMA" id="SQEHFFP"/>
<dbReference type="OrthoDB" id="1067797at2759"/>
<dbReference type="PhylomeDB" id="P47192"/>
<dbReference type="PRO" id="PR:P47192"/>
<dbReference type="Proteomes" id="UP000006548">
    <property type="component" value="Chromosome 2"/>
</dbReference>
<dbReference type="ExpressionAtlas" id="P47192">
    <property type="expression patterns" value="baseline and differential"/>
</dbReference>
<dbReference type="GO" id="GO:0031901">
    <property type="term" value="C:early endosome membrane"/>
    <property type="evidence" value="ECO:0007669"/>
    <property type="project" value="UniProtKB-SubCell"/>
</dbReference>
<dbReference type="GO" id="GO:0005886">
    <property type="term" value="C:plasma membrane"/>
    <property type="evidence" value="ECO:0007669"/>
    <property type="project" value="UniProtKB-SubCell"/>
</dbReference>
<dbReference type="GO" id="GO:0015031">
    <property type="term" value="P:protein transport"/>
    <property type="evidence" value="ECO:0007669"/>
    <property type="project" value="UniProtKB-KW"/>
</dbReference>
<dbReference type="GO" id="GO:0016192">
    <property type="term" value="P:vesicle-mediated transport"/>
    <property type="evidence" value="ECO:0007669"/>
    <property type="project" value="InterPro"/>
</dbReference>
<dbReference type="CDD" id="cd14824">
    <property type="entry name" value="Longin"/>
    <property type="match status" value="1"/>
</dbReference>
<dbReference type="CDD" id="cd15843">
    <property type="entry name" value="R-SNARE"/>
    <property type="match status" value="1"/>
</dbReference>
<dbReference type="FunFam" id="3.30.450.50:FF:000002">
    <property type="entry name" value="Vesicle-associated membrane protein 722"/>
    <property type="match status" value="1"/>
</dbReference>
<dbReference type="FunFam" id="1.20.5.110:FF:000010">
    <property type="entry name" value="Vesicle-associated membrane protein 726"/>
    <property type="match status" value="1"/>
</dbReference>
<dbReference type="Gene3D" id="1.20.5.110">
    <property type="match status" value="1"/>
</dbReference>
<dbReference type="Gene3D" id="3.30.450.50">
    <property type="entry name" value="Longin domain"/>
    <property type="match status" value="1"/>
</dbReference>
<dbReference type="InterPro" id="IPR011012">
    <property type="entry name" value="Longin-like_dom_sf"/>
</dbReference>
<dbReference type="InterPro" id="IPR010908">
    <property type="entry name" value="Longin_dom"/>
</dbReference>
<dbReference type="InterPro" id="IPR001388">
    <property type="entry name" value="Synaptobrevin-like"/>
</dbReference>
<dbReference type="InterPro" id="IPR051097">
    <property type="entry name" value="Synaptobrevin-like_transport"/>
</dbReference>
<dbReference type="InterPro" id="IPR042855">
    <property type="entry name" value="V_SNARE_CC"/>
</dbReference>
<dbReference type="PANTHER" id="PTHR21136">
    <property type="entry name" value="SNARE PROTEINS"/>
    <property type="match status" value="1"/>
</dbReference>
<dbReference type="PANTHER" id="PTHR21136:SF188">
    <property type="entry name" value="VESICLE-ASSOCIATED MEMBRANE PROTEIN 722-RELATED"/>
    <property type="match status" value="1"/>
</dbReference>
<dbReference type="Pfam" id="PF13774">
    <property type="entry name" value="Longin"/>
    <property type="match status" value="1"/>
</dbReference>
<dbReference type="Pfam" id="PF00957">
    <property type="entry name" value="Synaptobrevin"/>
    <property type="match status" value="1"/>
</dbReference>
<dbReference type="PRINTS" id="PR00219">
    <property type="entry name" value="SYNAPTOBREVN"/>
</dbReference>
<dbReference type="SMART" id="SM01270">
    <property type="entry name" value="Longin"/>
    <property type="match status" value="1"/>
</dbReference>
<dbReference type="SUPFAM" id="SSF58038">
    <property type="entry name" value="SNARE fusion complex"/>
    <property type="match status" value="1"/>
</dbReference>
<dbReference type="SUPFAM" id="SSF64356">
    <property type="entry name" value="SNARE-like"/>
    <property type="match status" value="1"/>
</dbReference>
<dbReference type="PROSITE" id="PS50859">
    <property type="entry name" value="LONGIN"/>
    <property type="match status" value="1"/>
</dbReference>
<dbReference type="PROSITE" id="PS00417">
    <property type="entry name" value="SYNAPTOBREVIN"/>
    <property type="match status" value="1"/>
</dbReference>
<dbReference type="PROSITE" id="PS50892">
    <property type="entry name" value="V_SNARE"/>
    <property type="match status" value="1"/>
</dbReference>
<evidence type="ECO:0000250" key="1">
    <source>
        <dbReference type="UniProtKB" id="Q12255"/>
    </source>
</evidence>
<evidence type="ECO:0000255" key="2"/>
<evidence type="ECO:0000255" key="3">
    <source>
        <dbReference type="PROSITE-ProRule" id="PRU00231"/>
    </source>
</evidence>
<evidence type="ECO:0000255" key="4">
    <source>
        <dbReference type="PROSITE-ProRule" id="PRU00290"/>
    </source>
</evidence>
<evidence type="ECO:0000269" key="5">
    <source>
    </source>
</evidence>
<evidence type="ECO:0000303" key="6">
    <source>
    </source>
</evidence>
<evidence type="ECO:0000303" key="7">
    <source>
    </source>
</evidence>
<evidence type="ECO:0000303" key="8">
    <source ref="1"/>
</evidence>
<evidence type="ECO:0000305" key="9"/>
<evidence type="ECO:0000305" key="10">
    <source>
    </source>
</evidence>
<evidence type="ECO:0000312" key="11">
    <source>
        <dbReference type="Araport" id="AT2G33120"/>
    </source>
</evidence>
<evidence type="ECO:0000312" key="12">
    <source>
        <dbReference type="EMBL" id="AAC04921.1"/>
    </source>
</evidence>
<proteinExistence type="evidence at transcript level"/>
<keyword id="KW-0025">Alternative splicing</keyword>
<keyword id="KW-1003">Cell membrane</keyword>
<keyword id="KW-0175">Coiled coil</keyword>
<keyword id="KW-0967">Endosome</keyword>
<keyword id="KW-0472">Membrane</keyword>
<keyword id="KW-0653">Protein transport</keyword>
<keyword id="KW-1185">Reference proteome</keyword>
<keyword id="KW-0812">Transmembrane</keyword>
<keyword id="KW-1133">Transmembrane helix</keyword>
<keyword id="KW-0813">Transport</keyword>
<name>VA722_ARATH</name>
<accession>P47192</accession>
<accession>O49321</accession>
<gene>
    <name evidence="6" type="primary">VAMP722</name>
    <name evidence="7" type="synonym">HAT24</name>
    <name evidence="8" type="synonym">SAR1</name>
    <name evidence="11" type="ordered locus">At2g33120</name>
    <name evidence="12" type="ORF">F25I18.14</name>
</gene>